<feature type="chain" id="PRO_0000134431" description="Isopentenyl-diphosphate delta-isomerase">
    <location>
        <begin position="1"/>
        <end position="336"/>
    </location>
</feature>
<feature type="binding site" evidence="1">
    <location>
        <begin position="5"/>
        <end position="6"/>
    </location>
    <ligand>
        <name>substrate</name>
    </ligand>
</feature>
<feature type="binding site" evidence="1">
    <location>
        <begin position="60"/>
        <end position="62"/>
    </location>
    <ligand>
        <name>FMN</name>
        <dbReference type="ChEBI" id="CHEBI:58210"/>
    </ligand>
</feature>
<feature type="binding site" evidence="1">
    <location>
        <position position="90"/>
    </location>
    <ligand>
        <name>FMN</name>
        <dbReference type="ChEBI" id="CHEBI:58210"/>
    </ligand>
</feature>
<feature type="binding site" evidence="1">
    <location>
        <position position="117"/>
    </location>
    <ligand>
        <name>FMN</name>
        <dbReference type="ChEBI" id="CHEBI:58210"/>
    </ligand>
</feature>
<feature type="binding site" evidence="1">
    <location>
        <position position="147"/>
    </location>
    <ligand>
        <name>substrate</name>
    </ligand>
</feature>
<feature type="binding site" evidence="1">
    <location>
        <position position="148"/>
    </location>
    <ligand>
        <name>Mg(2+)</name>
        <dbReference type="ChEBI" id="CHEBI:18420"/>
    </ligand>
</feature>
<feature type="binding site" evidence="1">
    <location>
        <position position="179"/>
    </location>
    <ligand>
        <name>FMN</name>
        <dbReference type="ChEBI" id="CHEBI:58210"/>
    </ligand>
</feature>
<feature type="binding site" evidence="1">
    <location>
        <position position="204"/>
    </location>
    <ligand>
        <name>FMN</name>
        <dbReference type="ChEBI" id="CHEBI:58210"/>
    </ligand>
</feature>
<feature type="binding site" evidence="1">
    <location>
        <position position="209"/>
    </location>
    <ligand>
        <name>FMN</name>
        <dbReference type="ChEBI" id="CHEBI:58210"/>
    </ligand>
</feature>
<feature type="binding site" evidence="1">
    <location>
        <begin position="253"/>
        <end position="255"/>
    </location>
    <ligand>
        <name>FMN</name>
        <dbReference type="ChEBI" id="CHEBI:58210"/>
    </ligand>
</feature>
<feature type="binding site" evidence="1">
    <location>
        <begin position="274"/>
        <end position="275"/>
    </location>
    <ligand>
        <name>FMN</name>
        <dbReference type="ChEBI" id="CHEBI:58210"/>
    </ligand>
</feature>
<proteinExistence type="inferred from homology"/>
<keyword id="KW-0963">Cytoplasm</keyword>
<keyword id="KW-0285">Flavoprotein</keyword>
<keyword id="KW-0288">FMN</keyword>
<keyword id="KW-0413">Isomerase</keyword>
<keyword id="KW-0414">Isoprene biosynthesis</keyword>
<keyword id="KW-0460">Magnesium</keyword>
<keyword id="KW-0479">Metal-binding</keyword>
<keyword id="KW-0521">NADP</keyword>
<keyword id="KW-1185">Reference proteome</keyword>
<sequence length="336" mass="37687">MTTNRKDEHILYALEQKSSYNSFDEVELIHSSLPLYNLDEIDLSTEFAGRKWDFPFYINAMTGGSNKGREINQKLAQVAESCGILFVTGSYSAALKNPTDDSFSVKSSHPNLLLGTNIGLDKPVELGLQTVEEMNPVLLQVHVNVMQELLMPEGERKFRSWQSHLADYSKQIPVPIVLKEVGFGMDAKTIERAYEFGVRTVDLSGRGGTSFAYIENRRSGQRDYLNQWGQSTMQALLNAQEWKDKVELLVSGGVRNPLDMIKCLVFGAKAVGLSRTVLELVETYTVEEVIGIVQGWKADLRLIMCSLNCATIADLQKVDYLLYGKLKEAKDQMKKA</sequence>
<accession>Q97SH8</accession>
<comment type="function">
    <text evidence="1">Involved in the biosynthesis of isoprenoids. Catalyzes the 1,3-allylic rearrangement of the homoallylic substrate isopentenyl (IPP) to its allylic isomer, dimethylallyl diphosphate (DMAPP).</text>
</comment>
<comment type="catalytic activity">
    <reaction evidence="1">
        <text>isopentenyl diphosphate = dimethylallyl diphosphate</text>
        <dbReference type="Rhea" id="RHEA:23284"/>
        <dbReference type="ChEBI" id="CHEBI:57623"/>
        <dbReference type="ChEBI" id="CHEBI:128769"/>
        <dbReference type="EC" id="5.3.3.2"/>
    </reaction>
</comment>
<comment type="cofactor">
    <cofactor evidence="1">
        <name>FMN</name>
        <dbReference type="ChEBI" id="CHEBI:58210"/>
    </cofactor>
</comment>
<comment type="cofactor">
    <cofactor evidence="1">
        <name>NADPH</name>
        <dbReference type="ChEBI" id="CHEBI:57783"/>
    </cofactor>
</comment>
<comment type="cofactor">
    <cofactor evidence="1">
        <name>Mg(2+)</name>
        <dbReference type="ChEBI" id="CHEBI:18420"/>
    </cofactor>
</comment>
<comment type="subunit">
    <text evidence="1">Homooctamer. Dimer of tetramers.</text>
</comment>
<comment type="subcellular location">
    <subcellularLocation>
        <location evidence="1">Cytoplasm</location>
    </subcellularLocation>
</comment>
<comment type="similarity">
    <text evidence="1">Belongs to the IPP isomerase type 2 family.</text>
</comment>
<name>IDI2_STRPN</name>
<gene>
    <name evidence="1" type="primary">fni</name>
    <name type="ordered locus">SP_0384</name>
</gene>
<organism>
    <name type="scientific">Streptococcus pneumoniae serotype 4 (strain ATCC BAA-334 / TIGR4)</name>
    <dbReference type="NCBI Taxonomy" id="170187"/>
    <lineage>
        <taxon>Bacteria</taxon>
        <taxon>Bacillati</taxon>
        <taxon>Bacillota</taxon>
        <taxon>Bacilli</taxon>
        <taxon>Lactobacillales</taxon>
        <taxon>Streptococcaceae</taxon>
        <taxon>Streptococcus</taxon>
    </lineage>
</organism>
<dbReference type="EC" id="5.3.3.2" evidence="1"/>
<dbReference type="EMBL" id="AE005672">
    <property type="protein sequence ID" value="AAK74551.1"/>
    <property type="molecule type" value="Genomic_DNA"/>
</dbReference>
<dbReference type="PIR" id="F95044">
    <property type="entry name" value="F95044"/>
</dbReference>
<dbReference type="RefSeq" id="WP_000210618.1">
    <property type="nucleotide sequence ID" value="NZ_CP155539.1"/>
</dbReference>
<dbReference type="SMR" id="Q97SH8"/>
<dbReference type="PaxDb" id="170187-SP_0384"/>
<dbReference type="EnsemblBacteria" id="AAK74551">
    <property type="protein sequence ID" value="AAK74551"/>
    <property type="gene ID" value="SP_0384"/>
</dbReference>
<dbReference type="KEGG" id="spn:SP_0384"/>
<dbReference type="eggNOG" id="COG1304">
    <property type="taxonomic scope" value="Bacteria"/>
</dbReference>
<dbReference type="PhylomeDB" id="Q97SH8"/>
<dbReference type="BioCyc" id="SPNE170187:G1FZB-397-MONOMER"/>
<dbReference type="Proteomes" id="UP000000585">
    <property type="component" value="Chromosome"/>
</dbReference>
<dbReference type="GO" id="GO:0005737">
    <property type="term" value="C:cytoplasm"/>
    <property type="evidence" value="ECO:0007669"/>
    <property type="project" value="UniProtKB-SubCell"/>
</dbReference>
<dbReference type="GO" id="GO:0010181">
    <property type="term" value="F:FMN binding"/>
    <property type="evidence" value="ECO:0007669"/>
    <property type="project" value="UniProtKB-UniRule"/>
</dbReference>
<dbReference type="GO" id="GO:0004452">
    <property type="term" value="F:isopentenyl-diphosphate delta-isomerase activity"/>
    <property type="evidence" value="ECO:0007669"/>
    <property type="project" value="UniProtKB-UniRule"/>
</dbReference>
<dbReference type="GO" id="GO:0000287">
    <property type="term" value="F:magnesium ion binding"/>
    <property type="evidence" value="ECO:0007669"/>
    <property type="project" value="UniProtKB-UniRule"/>
</dbReference>
<dbReference type="GO" id="GO:0070402">
    <property type="term" value="F:NADPH binding"/>
    <property type="evidence" value="ECO:0007669"/>
    <property type="project" value="UniProtKB-UniRule"/>
</dbReference>
<dbReference type="GO" id="GO:0016491">
    <property type="term" value="F:oxidoreductase activity"/>
    <property type="evidence" value="ECO:0007669"/>
    <property type="project" value="InterPro"/>
</dbReference>
<dbReference type="GO" id="GO:0008299">
    <property type="term" value="P:isoprenoid biosynthetic process"/>
    <property type="evidence" value="ECO:0007669"/>
    <property type="project" value="UniProtKB-UniRule"/>
</dbReference>
<dbReference type="CDD" id="cd02811">
    <property type="entry name" value="IDI-2_FMN"/>
    <property type="match status" value="1"/>
</dbReference>
<dbReference type="Gene3D" id="3.20.20.70">
    <property type="entry name" value="Aldolase class I"/>
    <property type="match status" value="1"/>
</dbReference>
<dbReference type="HAMAP" id="MF_00354">
    <property type="entry name" value="Idi_2"/>
    <property type="match status" value="1"/>
</dbReference>
<dbReference type="InterPro" id="IPR013785">
    <property type="entry name" value="Aldolase_TIM"/>
</dbReference>
<dbReference type="InterPro" id="IPR000262">
    <property type="entry name" value="FMN-dep_DH"/>
</dbReference>
<dbReference type="InterPro" id="IPR011179">
    <property type="entry name" value="IPdP_isomerase"/>
</dbReference>
<dbReference type="NCBIfam" id="TIGR02151">
    <property type="entry name" value="IPP_isom_2"/>
    <property type="match status" value="1"/>
</dbReference>
<dbReference type="PANTHER" id="PTHR43665">
    <property type="entry name" value="ISOPENTENYL-DIPHOSPHATE DELTA-ISOMERASE"/>
    <property type="match status" value="1"/>
</dbReference>
<dbReference type="PANTHER" id="PTHR43665:SF1">
    <property type="entry name" value="ISOPENTENYL-DIPHOSPHATE DELTA-ISOMERASE"/>
    <property type="match status" value="1"/>
</dbReference>
<dbReference type="Pfam" id="PF01070">
    <property type="entry name" value="FMN_dh"/>
    <property type="match status" value="1"/>
</dbReference>
<dbReference type="PIRSF" id="PIRSF003314">
    <property type="entry name" value="IPP_isomerase"/>
    <property type="match status" value="1"/>
</dbReference>
<dbReference type="SUPFAM" id="SSF51395">
    <property type="entry name" value="FMN-linked oxidoreductases"/>
    <property type="match status" value="1"/>
</dbReference>
<protein>
    <recommendedName>
        <fullName evidence="1">Isopentenyl-diphosphate delta-isomerase</fullName>
        <shortName evidence="1">IPP isomerase</shortName>
        <ecNumber evidence="1">5.3.3.2</ecNumber>
    </recommendedName>
    <alternativeName>
        <fullName evidence="1">Isopentenyl diphosphate:dimethylallyl diphosphate isomerase</fullName>
    </alternativeName>
    <alternativeName>
        <fullName evidence="1">Isopentenyl pyrophosphate isomerase</fullName>
    </alternativeName>
    <alternativeName>
        <fullName evidence="1">Type 2 isopentenyl diphosphate isomerase</fullName>
        <shortName evidence="1">IDI-2</shortName>
    </alternativeName>
</protein>
<evidence type="ECO:0000255" key="1">
    <source>
        <dbReference type="HAMAP-Rule" id="MF_00354"/>
    </source>
</evidence>
<reference key="1">
    <citation type="journal article" date="2001" name="Science">
        <title>Complete genome sequence of a virulent isolate of Streptococcus pneumoniae.</title>
        <authorList>
            <person name="Tettelin H."/>
            <person name="Nelson K.E."/>
            <person name="Paulsen I.T."/>
            <person name="Eisen J.A."/>
            <person name="Read T.D."/>
            <person name="Peterson S.N."/>
            <person name="Heidelberg J.F."/>
            <person name="DeBoy R.T."/>
            <person name="Haft D.H."/>
            <person name="Dodson R.J."/>
            <person name="Durkin A.S."/>
            <person name="Gwinn M.L."/>
            <person name="Kolonay J.F."/>
            <person name="Nelson W.C."/>
            <person name="Peterson J.D."/>
            <person name="Umayam L.A."/>
            <person name="White O."/>
            <person name="Salzberg S.L."/>
            <person name="Lewis M.R."/>
            <person name="Radune D."/>
            <person name="Holtzapple E.K."/>
            <person name="Khouri H.M."/>
            <person name="Wolf A.M."/>
            <person name="Utterback T.R."/>
            <person name="Hansen C.L."/>
            <person name="McDonald L.A."/>
            <person name="Feldblyum T.V."/>
            <person name="Angiuoli S.V."/>
            <person name="Dickinson T."/>
            <person name="Hickey E.K."/>
            <person name="Holt I.E."/>
            <person name="Loftus B.J."/>
            <person name="Yang F."/>
            <person name="Smith H.O."/>
            <person name="Venter J.C."/>
            <person name="Dougherty B.A."/>
            <person name="Morrison D.A."/>
            <person name="Hollingshead S.K."/>
            <person name="Fraser C.M."/>
        </authorList>
    </citation>
    <scope>NUCLEOTIDE SEQUENCE [LARGE SCALE GENOMIC DNA]</scope>
    <source>
        <strain>ATCC BAA-334 / TIGR4</strain>
    </source>
</reference>